<organism>
    <name type="scientific">Limosilactobacillus reuteri subsp. reuteri (strain JCM 1112)</name>
    <name type="common">Lactobacillus reuteri</name>
    <dbReference type="NCBI Taxonomy" id="557433"/>
    <lineage>
        <taxon>Bacteria</taxon>
        <taxon>Bacillati</taxon>
        <taxon>Bacillota</taxon>
        <taxon>Bacilli</taxon>
        <taxon>Lactobacillales</taxon>
        <taxon>Lactobacillaceae</taxon>
        <taxon>Limosilactobacillus</taxon>
    </lineage>
</organism>
<evidence type="ECO:0000255" key="1">
    <source>
        <dbReference type="HAMAP-Rule" id="MF_01201"/>
    </source>
</evidence>
<accession>B2G5M9</accession>
<feature type="chain" id="PRO_1000138607" description="Alanine racemase">
    <location>
        <begin position="1"/>
        <end position="375"/>
    </location>
</feature>
<feature type="active site" description="Proton acceptor; specific for D-alanine" evidence="1">
    <location>
        <position position="40"/>
    </location>
</feature>
<feature type="active site" description="Proton acceptor; specific for L-alanine" evidence="1">
    <location>
        <position position="268"/>
    </location>
</feature>
<feature type="binding site" evidence="1">
    <location>
        <position position="140"/>
    </location>
    <ligand>
        <name>substrate</name>
    </ligand>
</feature>
<feature type="binding site" evidence="1">
    <location>
        <position position="315"/>
    </location>
    <ligand>
        <name>substrate</name>
    </ligand>
</feature>
<feature type="modified residue" description="N6-(pyridoxal phosphate)lysine" evidence="1">
    <location>
        <position position="40"/>
    </location>
</feature>
<reference key="1">
    <citation type="journal article" date="2008" name="DNA Res.">
        <title>Comparative genome analysis of Lactobacillus reuteri and Lactobacillus fermentum reveal a genomic island for reuterin and cobalamin production.</title>
        <authorList>
            <person name="Morita H."/>
            <person name="Toh H."/>
            <person name="Fukuda S."/>
            <person name="Horikawa H."/>
            <person name="Oshima K."/>
            <person name="Suzuki T."/>
            <person name="Murakami M."/>
            <person name="Hisamatsu S."/>
            <person name="Kato Y."/>
            <person name="Takizawa T."/>
            <person name="Fukuoka H."/>
            <person name="Yoshimura T."/>
            <person name="Itoh K."/>
            <person name="O'Sullivan D.J."/>
            <person name="McKay L.L."/>
            <person name="Ohno H."/>
            <person name="Kikuchi J."/>
            <person name="Masaoka T."/>
            <person name="Hattori M."/>
        </authorList>
    </citation>
    <scope>NUCLEOTIDE SEQUENCE [LARGE SCALE GENOMIC DNA]</scope>
    <source>
        <strain>JCM 1112</strain>
    </source>
</reference>
<proteinExistence type="inferred from homology"/>
<gene>
    <name type="primary">alr</name>
    <name type="ordered locus">LAR_0245</name>
</gene>
<keyword id="KW-0413">Isomerase</keyword>
<keyword id="KW-0663">Pyridoxal phosphate</keyword>
<dbReference type="EC" id="5.1.1.1" evidence="1"/>
<dbReference type="EMBL" id="AP007281">
    <property type="protein sequence ID" value="BAG24761.1"/>
    <property type="molecule type" value="Genomic_DNA"/>
</dbReference>
<dbReference type="RefSeq" id="WP_003667248.1">
    <property type="nucleotide sequence ID" value="NC_010609.1"/>
</dbReference>
<dbReference type="SMR" id="B2G5M9"/>
<dbReference type="KEGG" id="lrf:LAR_0245"/>
<dbReference type="HOGENOM" id="CLU_028393_2_1_9"/>
<dbReference type="UniPathway" id="UPA00042">
    <property type="reaction ID" value="UER00497"/>
</dbReference>
<dbReference type="GO" id="GO:0005829">
    <property type="term" value="C:cytosol"/>
    <property type="evidence" value="ECO:0007669"/>
    <property type="project" value="TreeGrafter"/>
</dbReference>
<dbReference type="GO" id="GO:0008784">
    <property type="term" value="F:alanine racemase activity"/>
    <property type="evidence" value="ECO:0007669"/>
    <property type="project" value="UniProtKB-UniRule"/>
</dbReference>
<dbReference type="GO" id="GO:0030170">
    <property type="term" value="F:pyridoxal phosphate binding"/>
    <property type="evidence" value="ECO:0007669"/>
    <property type="project" value="UniProtKB-UniRule"/>
</dbReference>
<dbReference type="GO" id="GO:0030632">
    <property type="term" value="P:D-alanine biosynthetic process"/>
    <property type="evidence" value="ECO:0007669"/>
    <property type="project" value="UniProtKB-UniRule"/>
</dbReference>
<dbReference type="GO" id="GO:0009252">
    <property type="term" value="P:peptidoglycan biosynthetic process"/>
    <property type="evidence" value="ECO:0007669"/>
    <property type="project" value="TreeGrafter"/>
</dbReference>
<dbReference type="CDD" id="cd00430">
    <property type="entry name" value="PLPDE_III_AR"/>
    <property type="match status" value="1"/>
</dbReference>
<dbReference type="FunFam" id="2.40.37.10:FF:000006">
    <property type="entry name" value="Alanine racemase"/>
    <property type="match status" value="1"/>
</dbReference>
<dbReference type="FunFam" id="3.20.20.10:FF:000002">
    <property type="entry name" value="Alanine racemase"/>
    <property type="match status" value="1"/>
</dbReference>
<dbReference type="Gene3D" id="3.20.20.10">
    <property type="entry name" value="Alanine racemase"/>
    <property type="match status" value="1"/>
</dbReference>
<dbReference type="Gene3D" id="2.40.37.10">
    <property type="entry name" value="Lyase, Ornithine Decarboxylase, Chain A, domain 1"/>
    <property type="match status" value="1"/>
</dbReference>
<dbReference type="HAMAP" id="MF_01201">
    <property type="entry name" value="Ala_racemase"/>
    <property type="match status" value="1"/>
</dbReference>
<dbReference type="InterPro" id="IPR000821">
    <property type="entry name" value="Ala_racemase"/>
</dbReference>
<dbReference type="InterPro" id="IPR009006">
    <property type="entry name" value="Ala_racemase/Decarboxylase_C"/>
</dbReference>
<dbReference type="InterPro" id="IPR011079">
    <property type="entry name" value="Ala_racemase_C"/>
</dbReference>
<dbReference type="InterPro" id="IPR001608">
    <property type="entry name" value="Ala_racemase_N"/>
</dbReference>
<dbReference type="InterPro" id="IPR020622">
    <property type="entry name" value="Ala_racemase_pyridoxalP-BS"/>
</dbReference>
<dbReference type="InterPro" id="IPR029066">
    <property type="entry name" value="PLP-binding_barrel"/>
</dbReference>
<dbReference type="NCBIfam" id="TIGR00492">
    <property type="entry name" value="alr"/>
    <property type="match status" value="1"/>
</dbReference>
<dbReference type="PANTHER" id="PTHR30511">
    <property type="entry name" value="ALANINE RACEMASE"/>
    <property type="match status" value="1"/>
</dbReference>
<dbReference type="PANTHER" id="PTHR30511:SF0">
    <property type="entry name" value="ALANINE RACEMASE, CATABOLIC-RELATED"/>
    <property type="match status" value="1"/>
</dbReference>
<dbReference type="Pfam" id="PF00842">
    <property type="entry name" value="Ala_racemase_C"/>
    <property type="match status" value="1"/>
</dbReference>
<dbReference type="Pfam" id="PF01168">
    <property type="entry name" value="Ala_racemase_N"/>
    <property type="match status" value="1"/>
</dbReference>
<dbReference type="PRINTS" id="PR00992">
    <property type="entry name" value="ALARACEMASE"/>
</dbReference>
<dbReference type="SMART" id="SM01005">
    <property type="entry name" value="Ala_racemase_C"/>
    <property type="match status" value="1"/>
</dbReference>
<dbReference type="SUPFAM" id="SSF50621">
    <property type="entry name" value="Alanine racemase C-terminal domain-like"/>
    <property type="match status" value="1"/>
</dbReference>
<dbReference type="SUPFAM" id="SSF51419">
    <property type="entry name" value="PLP-binding barrel"/>
    <property type="match status" value="1"/>
</dbReference>
<dbReference type="PROSITE" id="PS00395">
    <property type="entry name" value="ALANINE_RACEMASE"/>
    <property type="match status" value="1"/>
</dbReference>
<comment type="function">
    <text evidence="1">Catalyzes the interconversion of L-alanine and D-alanine. May also act on other amino acids.</text>
</comment>
<comment type="catalytic activity">
    <reaction evidence="1">
        <text>L-alanine = D-alanine</text>
        <dbReference type="Rhea" id="RHEA:20249"/>
        <dbReference type="ChEBI" id="CHEBI:57416"/>
        <dbReference type="ChEBI" id="CHEBI:57972"/>
        <dbReference type="EC" id="5.1.1.1"/>
    </reaction>
</comment>
<comment type="cofactor">
    <cofactor evidence="1">
        <name>pyridoxal 5'-phosphate</name>
        <dbReference type="ChEBI" id="CHEBI:597326"/>
    </cofactor>
</comment>
<comment type="pathway">
    <text evidence="1">Amino-acid biosynthesis; D-alanine biosynthesis; D-alanine from L-alanine: step 1/1.</text>
</comment>
<comment type="similarity">
    <text evidence="1">Belongs to the alanine racemase family.</text>
</comment>
<name>ALR_LIMRJ</name>
<protein>
    <recommendedName>
        <fullName evidence="1">Alanine racemase</fullName>
        <ecNumber evidence="1">5.1.1.1</ecNumber>
    </recommendedName>
</protein>
<sequence>MVNGRLRDTSLIVDLDALRHNIQEQKKVLPENSKILAVVKANAYGNGLIPVAQTAMTSGASGLCVAILDEALELRDNGIEAMTLVLGITSVEDALIAAQAGVSLTVGSLDWLEQYHQLAQVAKPKKPLKVHLGIDSGMGRIGFTEVAAFKQAVKLLDSPEFEFEGMFTHFATADSPDENYFNQQVQRWHQFVASLAELPPYVHMANSATGLWHRETITANTIRMGISMYGQNPSGRDLKLTLDLQPVSSLVSSISFVKQLKAGRSVSYGATYTAEQDEWLATLPIGYADGYPRCMTGYKVLVDGQFCDIAGRVCMDQMMIRLPKYYPVGTPVVLMGKSGDQEITATDLAERAGTINYEILTNISNRVHRIYRQSK</sequence>